<feature type="signal peptide" evidence="2">
    <location>
        <begin position="1"/>
        <end position="18"/>
    </location>
</feature>
<feature type="chain" id="PRO_0000425359" description="Proapolipoprotein A-II">
    <location>
        <begin position="19"/>
        <end position="93"/>
    </location>
</feature>
<feature type="chain" id="PRO_0000415503" description="Apolipoprotein A-II" evidence="5">
    <location>
        <begin position="24"/>
        <end position="93"/>
    </location>
</feature>
<feature type="modified residue" description="Methionine sulfoxide" evidence="3">
    <location>
        <position position="49"/>
    </location>
</feature>
<feature type="modified residue" description="Phosphoserine" evidence="1">
    <location>
        <position position="54"/>
    </location>
</feature>
<feature type="modified residue" description="Phosphoserine" evidence="1">
    <location>
        <position position="68"/>
    </location>
</feature>
<organism>
    <name type="scientific">Pongo abelii</name>
    <name type="common">Sumatran orangutan</name>
    <name type="synonym">Pongo pygmaeus abelii</name>
    <dbReference type="NCBI Taxonomy" id="9601"/>
    <lineage>
        <taxon>Eukaryota</taxon>
        <taxon>Metazoa</taxon>
        <taxon>Chordata</taxon>
        <taxon>Craniata</taxon>
        <taxon>Vertebrata</taxon>
        <taxon>Euteleostomi</taxon>
        <taxon>Mammalia</taxon>
        <taxon>Eutheria</taxon>
        <taxon>Euarchontoglires</taxon>
        <taxon>Primates</taxon>
        <taxon>Haplorrhini</taxon>
        <taxon>Catarrhini</taxon>
        <taxon>Hominidae</taxon>
        <taxon>Pongo</taxon>
    </lineage>
</organism>
<accession>P0DJD2</accession>
<reference key="1">
    <citation type="journal article" date="2009" name="Comp. Biochem. Physiol.">
        <title>Mass spectral analyses of the two major apolipoproteins of great ape high density lipoproteins.</title>
        <authorList>
            <person name="Puppione D.L."/>
            <person name="Della Donna L."/>
            <person name="Laganowsky A.D."/>
            <person name="Bassilian S."/>
            <person name="Souda P."/>
            <person name="Ryder O.A."/>
            <person name="Whitelegge J.P."/>
        </authorList>
    </citation>
    <scope>MASS SPECTROMETRY</scope>
    <scope>SUBUNIT</scope>
    <scope>OXIDATION AT MET-49</scope>
</reference>
<reference key="2">
    <citation type="unpublished observations" date="2012-02">
        <authorList>
            <person name="Puppione D.L."/>
        </authorList>
    </citation>
    <scope>IDENTIFICATION</scope>
</reference>
<gene>
    <name type="primary">APOA2</name>
</gene>
<dbReference type="SMR" id="P0DJD2"/>
<dbReference type="FunCoup" id="P0DJD2">
    <property type="interactions" value="332"/>
</dbReference>
<dbReference type="InParanoid" id="P0DJD2"/>
<dbReference type="Proteomes" id="UP000001595">
    <property type="component" value="Unplaced"/>
</dbReference>
<dbReference type="GO" id="GO:0034366">
    <property type="term" value="C:spherical high-density lipoprotein particle"/>
    <property type="evidence" value="ECO:0007669"/>
    <property type="project" value="TreeGrafter"/>
</dbReference>
<dbReference type="GO" id="GO:0120020">
    <property type="term" value="F:cholesterol transfer activity"/>
    <property type="evidence" value="ECO:0007669"/>
    <property type="project" value="TreeGrafter"/>
</dbReference>
<dbReference type="GO" id="GO:0008035">
    <property type="term" value="F:high-density lipoprotein particle binding"/>
    <property type="evidence" value="ECO:0007669"/>
    <property type="project" value="TreeGrafter"/>
</dbReference>
<dbReference type="GO" id="GO:0008289">
    <property type="term" value="F:lipid binding"/>
    <property type="evidence" value="ECO:0007669"/>
    <property type="project" value="InterPro"/>
</dbReference>
<dbReference type="GO" id="GO:0042632">
    <property type="term" value="P:cholesterol homeostasis"/>
    <property type="evidence" value="ECO:0007669"/>
    <property type="project" value="TreeGrafter"/>
</dbReference>
<dbReference type="GO" id="GO:0030301">
    <property type="term" value="P:cholesterol transport"/>
    <property type="evidence" value="ECO:0007669"/>
    <property type="project" value="TreeGrafter"/>
</dbReference>
<dbReference type="GO" id="GO:0042157">
    <property type="term" value="P:lipoprotein metabolic process"/>
    <property type="evidence" value="ECO:0007669"/>
    <property type="project" value="InterPro"/>
</dbReference>
<dbReference type="GO" id="GO:0050766">
    <property type="term" value="P:positive regulation of phagocytosis"/>
    <property type="evidence" value="ECO:0000250"/>
    <property type="project" value="UniProtKB"/>
</dbReference>
<dbReference type="GO" id="GO:0050821">
    <property type="term" value="P:protein stabilization"/>
    <property type="evidence" value="ECO:0000250"/>
    <property type="project" value="UniProtKB"/>
</dbReference>
<dbReference type="Gene3D" id="6.10.250.100">
    <property type="match status" value="1"/>
</dbReference>
<dbReference type="InterPro" id="IPR006801">
    <property type="entry name" value="ApoA-II"/>
</dbReference>
<dbReference type="InterPro" id="IPR036172">
    <property type="entry name" value="ApoA-II_sf"/>
</dbReference>
<dbReference type="PANTHER" id="PTHR11027">
    <property type="entry name" value="APOLIPOPROTEIN A-II"/>
    <property type="match status" value="1"/>
</dbReference>
<dbReference type="PANTHER" id="PTHR11027:SF0">
    <property type="entry name" value="APOLIPOPROTEIN A-II"/>
    <property type="match status" value="1"/>
</dbReference>
<dbReference type="Pfam" id="PF04711">
    <property type="entry name" value="ApoA-II"/>
    <property type="match status" value="1"/>
</dbReference>
<dbReference type="SUPFAM" id="SSF82936">
    <property type="entry name" value="Apolipoprotein A-II"/>
    <property type="match status" value="1"/>
</dbReference>
<comment type="function">
    <text>May stabilize HDL (high density lipoprotein) structure by its association with lipids, and affect the HDL metabolism.</text>
</comment>
<comment type="subunit">
    <text evidence="1 3">Homodimer; disulfide-linked (PubMed:21298813). Interacts with NAXE and NDRG1 (By similarity).</text>
</comment>
<comment type="subcellular location">
    <subcellularLocation>
        <location evidence="1">Secreted</location>
    </subcellularLocation>
</comment>
<comment type="mass spectrometry" mass="16060.5" error="0.71" method="Electrospray" evidence="3">
    <molecule>Apolipoprotein A-II</molecule>
    <text>Homodimer, without methionine sulfoxide.</text>
</comment>
<comment type="mass spectrometry" mass="16076.0" method="Electrospray" evidence="3">
    <molecule>Apolipoprotein A-II</molecule>
    <text>Homodimer, with 1 methionine sulfoxide.</text>
</comment>
<comment type="similarity">
    <text evidence="4">Belongs to the apolipoprotein A2 family.</text>
</comment>
<evidence type="ECO:0000250" key="1">
    <source>
        <dbReference type="UniProtKB" id="P02652"/>
    </source>
</evidence>
<evidence type="ECO:0000255" key="2"/>
<evidence type="ECO:0000269" key="3">
    <source>
    </source>
</evidence>
<evidence type="ECO:0000305" key="4"/>
<evidence type="ECO:0000305" key="5">
    <source>
    </source>
</evidence>
<sequence length="93" mass="10516">MKLLAATVLLLTICSLEGALVRRQAKEPCVESPVSQYFQTVTDYGKDLMEKVKSPELQAEAKSYFEKSKEQLTPLIKKAGTELVNFLNYFLEL</sequence>
<name>APOA2_PONAB</name>
<protein>
    <recommendedName>
        <fullName>Apolipoprotein A-II</fullName>
        <shortName>Apo-AII</shortName>
        <shortName>ApoA-II</shortName>
    </recommendedName>
    <alternativeName>
        <fullName>Apolipoprotein A2</fullName>
    </alternativeName>
    <component>
        <recommendedName>
            <fullName>Proapolipoprotein A-II</fullName>
            <shortName>ProapoA-II</shortName>
        </recommendedName>
    </component>
</protein>
<keyword id="KW-0165">Cleavage on pair of basic residues</keyword>
<keyword id="KW-1015">Disulfide bond</keyword>
<keyword id="KW-0345">HDL</keyword>
<keyword id="KW-0445">Lipid transport</keyword>
<keyword id="KW-0558">Oxidation</keyword>
<keyword id="KW-0597">Phosphoprotein</keyword>
<keyword id="KW-1185">Reference proteome</keyword>
<keyword id="KW-0964">Secreted</keyword>
<keyword id="KW-0732">Signal</keyword>
<keyword id="KW-0813">Transport</keyword>
<proteinExistence type="evidence at protein level"/>